<organism>
    <name type="scientific">Trichlorobacter lovleyi (strain ATCC BAA-1151 / DSM 17278 / SZ)</name>
    <name type="common">Geobacter lovleyi</name>
    <dbReference type="NCBI Taxonomy" id="398767"/>
    <lineage>
        <taxon>Bacteria</taxon>
        <taxon>Pseudomonadati</taxon>
        <taxon>Thermodesulfobacteriota</taxon>
        <taxon>Desulfuromonadia</taxon>
        <taxon>Geobacterales</taxon>
        <taxon>Geobacteraceae</taxon>
        <taxon>Trichlorobacter</taxon>
    </lineage>
</organism>
<accession>B3E422</accession>
<proteinExistence type="inferred from homology"/>
<name>ERA_TRIL1</name>
<dbReference type="EMBL" id="CP001089">
    <property type="protein sequence ID" value="ACD95843.1"/>
    <property type="molecule type" value="Genomic_DNA"/>
</dbReference>
<dbReference type="RefSeq" id="WP_012470182.1">
    <property type="nucleotide sequence ID" value="NC_010814.1"/>
</dbReference>
<dbReference type="SMR" id="B3E422"/>
<dbReference type="STRING" id="398767.Glov_2127"/>
<dbReference type="KEGG" id="glo:Glov_2127"/>
<dbReference type="eggNOG" id="COG1159">
    <property type="taxonomic scope" value="Bacteria"/>
</dbReference>
<dbReference type="HOGENOM" id="CLU_038009_1_0_7"/>
<dbReference type="OrthoDB" id="9805918at2"/>
<dbReference type="Proteomes" id="UP000002420">
    <property type="component" value="Chromosome"/>
</dbReference>
<dbReference type="GO" id="GO:0005829">
    <property type="term" value="C:cytosol"/>
    <property type="evidence" value="ECO:0007669"/>
    <property type="project" value="TreeGrafter"/>
</dbReference>
<dbReference type="GO" id="GO:0005886">
    <property type="term" value="C:plasma membrane"/>
    <property type="evidence" value="ECO:0007669"/>
    <property type="project" value="UniProtKB-SubCell"/>
</dbReference>
<dbReference type="GO" id="GO:0005525">
    <property type="term" value="F:GTP binding"/>
    <property type="evidence" value="ECO:0007669"/>
    <property type="project" value="UniProtKB-UniRule"/>
</dbReference>
<dbReference type="GO" id="GO:0003924">
    <property type="term" value="F:GTPase activity"/>
    <property type="evidence" value="ECO:0007669"/>
    <property type="project" value="UniProtKB-UniRule"/>
</dbReference>
<dbReference type="GO" id="GO:0043024">
    <property type="term" value="F:ribosomal small subunit binding"/>
    <property type="evidence" value="ECO:0007669"/>
    <property type="project" value="TreeGrafter"/>
</dbReference>
<dbReference type="GO" id="GO:0070181">
    <property type="term" value="F:small ribosomal subunit rRNA binding"/>
    <property type="evidence" value="ECO:0007669"/>
    <property type="project" value="UniProtKB-UniRule"/>
</dbReference>
<dbReference type="GO" id="GO:0000028">
    <property type="term" value="P:ribosomal small subunit assembly"/>
    <property type="evidence" value="ECO:0007669"/>
    <property type="project" value="TreeGrafter"/>
</dbReference>
<dbReference type="CDD" id="cd04163">
    <property type="entry name" value="Era"/>
    <property type="match status" value="1"/>
</dbReference>
<dbReference type="CDD" id="cd22534">
    <property type="entry name" value="KH-II_Era"/>
    <property type="match status" value="1"/>
</dbReference>
<dbReference type="FunFam" id="3.30.300.20:FF:000003">
    <property type="entry name" value="GTPase Era"/>
    <property type="match status" value="1"/>
</dbReference>
<dbReference type="FunFam" id="3.40.50.300:FF:000094">
    <property type="entry name" value="GTPase Era"/>
    <property type="match status" value="1"/>
</dbReference>
<dbReference type="Gene3D" id="3.30.300.20">
    <property type="match status" value="1"/>
</dbReference>
<dbReference type="Gene3D" id="3.40.50.300">
    <property type="entry name" value="P-loop containing nucleotide triphosphate hydrolases"/>
    <property type="match status" value="1"/>
</dbReference>
<dbReference type="HAMAP" id="MF_00367">
    <property type="entry name" value="GTPase_Era"/>
    <property type="match status" value="1"/>
</dbReference>
<dbReference type="InterPro" id="IPR030388">
    <property type="entry name" value="G_ERA_dom"/>
</dbReference>
<dbReference type="InterPro" id="IPR006073">
    <property type="entry name" value="GTP-bd"/>
</dbReference>
<dbReference type="InterPro" id="IPR005662">
    <property type="entry name" value="GTPase_Era-like"/>
</dbReference>
<dbReference type="InterPro" id="IPR015946">
    <property type="entry name" value="KH_dom-like_a/b"/>
</dbReference>
<dbReference type="InterPro" id="IPR004044">
    <property type="entry name" value="KH_dom_type_2"/>
</dbReference>
<dbReference type="InterPro" id="IPR009019">
    <property type="entry name" value="KH_sf_prok-type"/>
</dbReference>
<dbReference type="InterPro" id="IPR027417">
    <property type="entry name" value="P-loop_NTPase"/>
</dbReference>
<dbReference type="InterPro" id="IPR005225">
    <property type="entry name" value="Small_GTP-bd"/>
</dbReference>
<dbReference type="NCBIfam" id="TIGR00436">
    <property type="entry name" value="era"/>
    <property type="match status" value="1"/>
</dbReference>
<dbReference type="NCBIfam" id="NF000908">
    <property type="entry name" value="PRK00089.1"/>
    <property type="match status" value="1"/>
</dbReference>
<dbReference type="NCBIfam" id="TIGR00231">
    <property type="entry name" value="small_GTP"/>
    <property type="match status" value="1"/>
</dbReference>
<dbReference type="PANTHER" id="PTHR42698">
    <property type="entry name" value="GTPASE ERA"/>
    <property type="match status" value="1"/>
</dbReference>
<dbReference type="PANTHER" id="PTHR42698:SF1">
    <property type="entry name" value="GTPASE ERA, MITOCHONDRIAL"/>
    <property type="match status" value="1"/>
</dbReference>
<dbReference type="Pfam" id="PF07650">
    <property type="entry name" value="KH_2"/>
    <property type="match status" value="1"/>
</dbReference>
<dbReference type="Pfam" id="PF01926">
    <property type="entry name" value="MMR_HSR1"/>
    <property type="match status" value="1"/>
</dbReference>
<dbReference type="SUPFAM" id="SSF52540">
    <property type="entry name" value="P-loop containing nucleoside triphosphate hydrolases"/>
    <property type="match status" value="1"/>
</dbReference>
<dbReference type="SUPFAM" id="SSF54814">
    <property type="entry name" value="Prokaryotic type KH domain (KH-domain type II)"/>
    <property type="match status" value="1"/>
</dbReference>
<dbReference type="PROSITE" id="PS51713">
    <property type="entry name" value="G_ERA"/>
    <property type="match status" value="1"/>
</dbReference>
<dbReference type="PROSITE" id="PS50823">
    <property type="entry name" value="KH_TYPE_2"/>
    <property type="match status" value="1"/>
</dbReference>
<feature type="chain" id="PRO_1000205540" description="GTPase Era">
    <location>
        <begin position="1"/>
        <end position="296"/>
    </location>
</feature>
<feature type="domain" description="Era-type G" evidence="2">
    <location>
        <begin position="7"/>
        <end position="173"/>
    </location>
</feature>
<feature type="domain" description="KH type-2" evidence="1">
    <location>
        <begin position="204"/>
        <end position="281"/>
    </location>
</feature>
<feature type="region of interest" description="G1" evidence="2">
    <location>
        <begin position="15"/>
        <end position="22"/>
    </location>
</feature>
<feature type="region of interest" description="G2" evidence="2">
    <location>
        <begin position="41"/>
        <end position="45"/>
    </location>
</feature>
<feature type="region of interest" description="G3" evidence="2">
    <location>
        <begin position="62"/>
        <end position="65"/>
    </location>
</feature>
<feature type="region of interest" description="G4" evidence="2">
    <location>
        <begin position="122"/>
        <end position="125"/>
    </location>
</feature>
<feature type="region of interest" description="G5" evidence="2">
    <location>
        <begin position="152"/>
        <end position="154"/>
    </location>
</feature>
<feature type="binding site" evidence="1">
    <location>
        <begin position="15"/>
        <end position="22"/>
    </location>
    <ligand>
        <name>GTP</name>
        <dbReference type="ChEBI" id="CHEBI:37565"/>
    </ligand>
</feature>
<feature type="binding site" evidence="1">
    <location>
        <begin position="62"/>
        <end position="66"/>
    </location>
    <ligand>
        <name>GTP</name>
        <dbReference type="ChEBI" id="CHEBI:37565"/>
    </ligand>
</feature>
<feature type="binding site" evidence="1">
    <location>
        <begin position="122"/>
        <end position="125"/>
    </location>
    <ligand>
        <name>GTP</name>
        <dbReference type="ChEBI" id="CHEBI:37565"/>
    </ligand>
</feature>
<protein>
    <recommendedName>
        <fullName evidence="1">GTPase Era</fullName>
    </recommendedName>
</protein>
<evidence type="ECO:0000255" key="1">
    <source>
        <dbReference type="HAMAP-Rule" id="MF_00367"/>
    </source>
</evidence>
<evidence type="ECO:0000255" key="2">
    <source>
        <dbReference type="PROSITE-ProRule" id="PRU01050"/>
    </source>
</evidence>
<gene>
    <name evidence="1" type="primary">era</name>
    <name type="ordered locus">Glov_2127</name>
</gene>
<comment type="function">
    <text evidence="1">An essential GTPase that binds both GDP and GTP, with rapid nucleotide exchange. Plays a role in 16S rRNA processing and 30S ribosomal subunit biogenesis and possibly also in cell cycle regulation and energy metabolism.</text>
</comment>
<comment type="subunit">
    <text evidence="1">Monomer.</text>
</comment>
<comment type="subcellular location">
    <subcellularLocation>
        <location>Cytoplasm</location>
    </subcellularLocation>
    <subcellularLocation>
        <location evidence="1">Cell inner membrane</location>
        <topology evidence="1">Peripheral membrane protein</topology>
    </subcellularLocation>
</comment>
<comment type="similarity">
    <text evidence="1 2">Belongs to the TRAFAC class TrmE-Era-EngA-EngB-Septin-like GTPase superfamily. Era GTPase family.</text>
</comment>
<keyword id="KW-0997">Cell inner membrane</keyword>
<keyword id="KW-1003">Cell membrane</keyword>
<keyword id="KW-0963">Cytoplasm</keyword>
<keyword id="KW-0342">GTP-binding</keyword>
<keyword id="KW-0472">Membrane</keyword>
<keyword id="KW-0547">Nucleotide-binding</keyword>
<keyword id="KW-1185">Reference proteome</keyword>
<keyword id="KW-0690">Ribosome biogenesis</keyword>
<keyword id="KW-0694">RNA-binding</keyword>
<keyword id="KW-0699">rRNA-binding</keyword>
<sequence>MSDSTYKAGFVSIIGRPNVGKSTLLNRILGEKIVAVSDKPQTTRNVIRGILSDETSQIVFVDTPGIHTARTRINRAMVDAAMTVVTGIDLMLLVVDATQKIEETFIKDICSKAGAPIYLVLNKIDQVTPKEKLFTVIEGYTRLYDFPEIIPISAQSGSNIERLVDLVREHLPEGEALFPDDILTDLPEKFIVAELIREKVFRLTNREVPYGTAVVVEAFAERENGLVAINATIMVERDSHKGIIIGKKGVMLKKIGEQARRDIERLLGTKVYLELFVQVQERWTERTAMLRELGYE</sequence>
<reference key="1">
    <citation type="submission" date="2008-05" db="EMBL/GenBank/DDBJ databases">
        <title>Complete sequence of chromosome of Geobacter lovleyi SZ.</title>
        <authorList>
            <consortium name="US DOE Joint Genome Institute"/>
            <person name="Lucas S."/>
            <person name="Copeland A."/>
            <person name="Lapidus A."/>
            <person name="Glavina del Rio T."/>
            <person name="Dalin E."/>
            <person name="Tice H."/>
            <person name="Bruce D."/>
            <person name="Goodwin L."/>
            <person name="Pitluck S."/>
            <person name="Chertkov O."/>
            <person name="Meincke L."/>
            <person name="Brettin T."/>
            <person name="Detter J.C."/>
            <person name="Han C."/>
            <person name="Tapia R."/>
            <person name="Kuske C.R."/>
            <person name="Schmutz J."/>
            <person name="Larimer F."/>
            <person name="Land M."/>
            <person name="Hauser L."/>
            <person name="Kyrpides N."/>
            <person name="Mikhailova N."/>
            <person name="Sung Y."/>
            <person name="Fletcher K.E."/>
            <person name="Ritalahti K.M."/>
            <person name="Loeffler F.E."/>
            <person name="Richardson P."/>
        </authorList>
    </citation>
    <scope>NUCLEOTIDE SEQUENCE [LARGE SCALE GENOMIC DNA]</scope>
    <source>
        <strain>ATCC BAA-1151 / DSM 17278 / SZ</strain>
    </source>
</reference>